<feature type="chain" id="PRO_0000060465" description="tRNA (guanine-N(1)-)-methyltransferase">
    <location>
        <begin position="1"/>
        <end position="250"/>
    </location>
</feature>
<feature type="binding site" evidence="1">
    <location>
        <position position="108"/>
    </location>
    <ligand>
        <name>S-adenosyl-L-methionine</name>
        <dbReference type="ChEBI" id="CHEBI:59789"/>
    </ligand>
</feature>
<feature type="binding site" evidence="1">
    <location>
        <begin position="127"/>
        <end position="132"/>
    </location>
    <ligand>
        <name>S-adenosyl-L-methionine</name>
        <dbReference type="ChEBI" id="CHEBI:59789"/>
    </ligand>
</feature>
<comment type="function">
    <text evidence="1">Specifically methylates guanosine-37 in various tRNAs.</text>
</comment>
<comment type="catalytic activity">
    <reaction evidence="1">
        <text>guanosine(37) in tRNA + S-adenosyl-L-methionine = N(1)-methylguanosine(37) in tRNA + S-adenosyl-L-homocysteine + H(+)</text>
        <dbReference type="Rhea" id="RHEA:36899"/>
        <dbReference type="Rhea" id="RHEA-COMP:10145"/>
        <dbReference type="Rhea" id="RHEA-COMP:10147"/>
        <dbReference type="ChEBI" id="CHEBI:15378"/>
        <dbReference type="ChEBI" id="CHEBI:57856"/>
        <dbReference type="ChEBI" id="CHEBI:59789"/>
        <dbReference type="ChEBI" id="CHEBI:73542"/>
        <dbReference type="ChEBI" id="CHEBI:74269"/>
        <dbReference type="EC" id="2.1.1.228"/>
    </reaction>
</comment>
<comment type="subunit">
    <text evidence="1">Homodimer.</text>
</comment>
<comment type="subcellular location">
    <subcellularLocation>
        <location evidence="1">Cytoplasm</location>
    </subcellularLocation>
</comment>
<comment type="similarity">
    <text evidence="1">Belongs to the RNA methyltransferase TrmD family.</text>
</comment>
<keyword id="KW-0963">Cytoplasm</keyword>
<keyword id="KW-0489">Methyltransferase</keyword>
<keyword id="KW-0949">S-adenosyl-L-methionine</keyword>
<keyword id="KW-0808">Transferase</keyword>
<keyword id="KW-0819">tRNA processing</keyword>
<evidence type="ECO:0000255" key="1">
    <source>
        <dbReference type="HAMAP-Rule" id="MF_00605"/>
    </source>
</evidence>
<accession>Q8E4H7</accession>
<protein>
    <recommendedName>
        <fullName evidence="1">tRNA (guanine-N(1)-)-methyltransferase</fullName>
        <ecNumber evidence="1">2.1.1.228</ecNumber>
    </recommendedName>
    <alternativeName>
        <fullName evidence="1">M1G-methyltransferase</fullName>
    </alternativeName>
    <alternativeName>
        <fullName evidence="1">tRNA [GM37] methyltransferase</fullName>
    </alternativeName>
</protein>
<reference key="1">
    <citation type="journal article" date="2002" name="Mol. Microbiol.">
        <title>Genome sequence of Streptococcus agalactiae, a pathogen causing invasive neonatal disease.</title>
        <authorList>
            <person name="Glaser P."/>
            <person name="Rusniok C."/>
            <person name="Buchrieser C."/>
            <person name="Chevalier F."/>
            <person name="Frangeul L."/>
            <person name="Msadek T."/>
            <person name="Zouine M."/>
            <person name="Couve E."/>
            <person name="Lalioui L."/>
            <person name="Poyart C."/>
            <person name="Trieu-Cuot P."/>
            <person name="Kunst F."/>
        </authorList>
    </citation>
    <scope>NUCLEOTIDE SEQUENCE [LARGE SCALE GENOMIC DNA]</scope>
    <source>
        <strain>NEM316</strain>
    </source>
</reference>
<sequence>MKIDILTLFPEMFAPLEHSIVGKAKERGLLEINYHNFRENAEKSRHVDDEPYGGGQGMLLRAQPIFDTIDKIDAQKARVILLDPAGRTFDQDFAEELSKEDELIFICGHYEGYDERIKSLVTDEVSLGDFVLTGGELAAMTMVDATVRLIPEVIGKETSHQDDSFSSGLLEYPQYTRPYDYLGMTVPDVLMSGHHENIRKWRLEQSLRKTLERRPDLLENYAMTDEERLILEKIKTEIERTDTVNEQNNL</sequence>
<name>TRMD_STRA3</name>
<dbReference type="EC" id="2.1.1.228" evidence="1"/>
<dbReference type="EMBL" id="AL766850">
    <property type="protein sequence ID" value="CAD47083.1"/>
    <property type="molecule type" value="Genomic_DNA"/>
</dbReference>
<dbReference type="SMR" id="Q8E4H7"/>
<dbReference type="KEGG" id="san:gbs1424"/>
<dbReference type="eggNOG" id="COG0336">
    <property type="taxonomic scope" value="Bacteria"/>
</dbReference>
<dbReference type="HOGENOM" id="CLU_047363_0_1_9"/>
<dbReference type="Proteomes" id="UP000000823">
    <property type="component" value="Chromosome"/>
</dbReference>
<dbReference type="GO" id="GO:0005829">
    <property type="term" value="C:cytosol"/>
    <property type="evidence" value="ECO:0007669"/>
    <property type="project" value="TreeGrafter"/>
</dbReference>
<dbReference type="GO" id="GO:0052906">
    <property type="term" value="F:tRNA (guanine(37)-N1)-methyltransferase activity"/>
    <property type="evidence" value="ECO:0007669"/>
    <property type="project" value="UniProtKB-UniRule"/>
</dbReference>
<dbReference type="GO" id="GO:0002939">
    <property type="term" value="P:tRNA N1-guanine methylation"/>
    <property type="evidence" value="ECO:0007669"/>
    <property type="project" value="TreeGrafter"/>
</dbReference>
<dbReference type="CDD" id="cd18080">
    <property type="entry name" value="TrmD-like"/>
    <property type="match status" value="1"/>
</dbReference>
<dbReference type="FunFam" id="1.10.1270.20:FF:000001">
    <property type="entry name" value="tRNA (guanine-N(1)-)-methyltransferase"/>
    <property type="match status" value="1"/>
</dbReference>
<dbReference type="FunFam" id="3.40.1280.10:FF:000001">
    <property type="entry name" value="tRNA (guanine-N(1)-)-methyltransferase"/>
    <property type="match status" value="1"/>
</dbReference>
<dbReference type="Gene3D" id="3.40.1280.10">
    <property type="match status" value="1"/>
</dbReference>
<dbReference type="Gene3D" id="1.10.1270.20">
    <property type="entry name" value="tRNA(m1g37)methyltransferase, domain 2"/>
    <property type="match status" value="1"/>
</dbReference>
<dbReference type="HAMAP" id="MF_00605">
    <property type="entry name" value="TrmD"/>
    <property type="match status" value="1"/>
</dbReference>
<dbReference type="InterPro" id="IPR029028">
    <property type="entry name" value="Alpha/beta_knot_MTases"/>
</dbReference>
<dbReference type="InterPro" id="IPR023148">
    <property type="entry name" value="tRNA_m1G_MeTrfase_C_sf"/>
</dbReference>
<dbReference type="InterPro" id="IPR002649">
    <property type="entry name" value="tRNA_m1G_MeTrfase_TrmD"/>
</dbReference>
<dbReference type="InterPro" id="IPR029026">
    <property type="entry name" value="tRNA_m1G_MTases_N"/>
</dbReference>
<dbReference type="InterPro" id="IPR016009">
    <property type="entry name" value="tRNA_MeTrfase_TRMD/TRM10"/>
</dbReference>
<dbReference type="NCBIfam" id="NF000648">
    <property type="entry name" value="PRK00026.1"/>
    <property type="match status" value="1"/>
</dbReference>
<dbReference type="NCBIfam" id="TIGR00088">
    <property type="entry name" value="trmD"/>
    <property type="match status" value="1"/>
</dbReference>
<dbReference type="PANTHER" id="PTHR46417">
    <property type="entry name" value="TRNA (GUANINE-N(1)-)-METHYLTRANSFERASE"/>
    <property type="match status" value="1"/>
</dbReference>
<dbReference type="PANTHER" id="PTHR46417:SF1">
    <property type="entry name" value="TRNA (GUANINE-N(1)-)-METHYLTRANSFERASE"/>
    <property type="match status" value="1"/>
</dbReference>
<dbReference type="Pfam" id="PF01746">
    <property type="entry name" value="tRNA_m1G_MT"/>
    <property type="match status" value="1"/>
</dbReference>
<dbReference type="PIRSF" id="PIRSF000386">
    <property type="entry name" value="tRNA_mtase"/>
    <property type="match status" value="1"/>
</dbReference>
<dbReference type="SUPFAM" id="SSF75217">
    <property type="entry name" value="alpha/beta knot"/>
    <property type="match status" value="1"/>
</dbReference>
<proteinExistence type="inferred from homology"/>
<gene>
    <name evidence="1" type="primary">trmD</name>
    <name type="ordered locus">gbs1424</name>
</gene>
<organism>
    <name type="scientific">Streptococcus agalactiae serotype III (strain NEM316)</name>
    <dbReference type="NCBI Taxonomy" id="211110"/>
    <lineage>
        <taxon>Bacteria</taxon>
        <taxon>Bacillati</taxon>
        <taxon>Bacillota</taxon>
        <taxon>Bacilli</taxon>
        <taxon>Lactobacillales</taxon>
        <taxon>Streptococcaceae</taxon>
        <taxon>Streptococcus</taxon>
    </lineage>
</organism>